<evidence type="ECO:0000255" key="1">
    <source>
        <dbReference type="HAMAP-Rule" id="MF_00823"/>
    </source>
</evidence>
<evidence type="ECO:0000255" key="2">
    <source>
        <dbReference type="PROSITE-ProRule" id="PRU01137"/>
    </source>
</evidence>
<gene>
    <name evidence="1" type="primary">accA</name>
    <name type="ordered locus">BP1910</name>
</gene>
<keyword id="KW-0067">ATP-binding</keyword>
<keyword id="KW-0963">Cytoplasm</keyword>
<keyword id="KW-0275">Fatty acid biosynthesis</keyword>
<keyword id="KW-0276">Fatty acid metabolism</keyword>
<keyword id="KW-0444">Lipid biosynthesis</keyword>
<keyword id="KW-0443">Lipid metabolism</keyword>
<keyword id="KW-0547">Nucleotide-binding</keyword>
<keyword id="KW-1185">Reference proteome</keyword>
<keyword id="KW-0808">Transferase</keyword>
<reference key="1">
    <citation type="journal article" date="2003" name="Nat. Genet.">
        <title>Comparative analysis of the genome sequences of Bordetella pertussis, Bordetella parapertussis and Bordetella bronchiseptica.</title>
        <authorList>
            <person name="Parkhill J."/>
            <person name="Sebaihia M."/>
            <person name="Preston A."/>
            <person name="Murphy L.D."/>
            <person name="Thomson N.R."/>
            <person name="Harris D.E."/>
            <person name="Holden M.T.G."/>
            <person name="Churcher C.M."/>
            <person name="Bentley S.D."/>
            <person name="Mungall K.L."/>
            <person name="Cerdeno-Tarraga A.-M."/>
            <person name="Temple L."/>
            <person name="James K.D."/>
            <person name="Harris B."/>
            <person name="Quail M.A."/>
            <person name="Achtman M."/>
            <person name="Atkin R."/>
            <person name="Baker S."/>
            <person name="Basham D."/>
            <person name="Bason N."/>
            <person name="Cherevach I."/>
            <person name="Chillingworth T."/>
            <person name="Collins M."/>
            <person name="Cronin A."/>
            <person name="Davis P."/>
            <person name="Doggett J."/>
            <person name="Feltwell T."/>
            <person name="Goble A."/>
            <person name="Hamlin N."/>
            <person name="Hauser H."/>
            <person name="Holroyd S."/>
            <person name="Jagels K."/>
            <person name="Leather S."/>
            <person name="Moule S."/>
            <person name="Norberczak H."/>
            <person name="O'Neil S."/>
            <person name="Ormond D."/>
            <person name="Price C."/>
            <person name="Rabbinowitsch E."/>
            <person name="Rutter S."/>
            <person name="Sanders M."/>
            <person name="Saunders D."/>
            <person name="Seeger K."/>
            <person name="Sharp S."/>
            <person name="Simmonds M."/>
            <person name="Skelton J."/>
            <person name="Squares R."/>
            <person name="Squares S."/>
            <person name="Stevens K."/>
            <person name="Unwin L."/>
            <person name="Whitehead S."/>
            <person name="Barrell B.G."/>
            <person name="Maskell D.J."/>
        </authorList>
    </citation>
    <scope>NUCLEOTIDE SEQUENCE [LARGE SCALE GENOMIC DNA]</scope>
    <source>
        <strain>Tohama I / ATCC BAA-589 / NCTC 13251</strain>
    </source>
</reference>
<proteinExistence type="inferred from homology"/>
<accession>Q7VX94</accession>
<dbReference type="EC" id="2.1.3.15" evidence="1"/>
<dbReference type="EMBL" id="BX640416">
    <property type="protein sequence ID" value="CAE42192.1"/>
    <property type="molecule type" value="Genomic_DNA"/>
</dbReference>
<dbReference type="RefSeq" id="NP_880596.1">
    <property type="nucleotide sequence ID" value="NC_002929.2"/>
</dbReference>
<dbReference type="RefSeq" id="WP_003810007.1">
    <property type="nucleotide sequence ID" value="NZ_CP039022.1"/>
</dbReference>
<dbReference type="SMR" id="Q7VX94"/>
<dbReference type="STRING" id="257313.BP1910"/>
<dbReference type="PaxDb" id="257313-BP1910"/>
<dbReference type="KEGG" id="bpe:BP1910"/>
<dbReference type="PATRIC" id="fig|257313.5.peg.2051"/>
<dbReference type="eggNOG" id="COG0825">
    <property type="taxonomic scope" value="Bacteria"/>
</dbReference>
<dbReference type="HOGENOM" id="CLU_015486_0_2_4"/>
<dbReference type="UniPathway" id="UPA00655">
    <property type="reaction ID" value="UER00711"/>
</dbReference>
<dbReference type="Proteomes" id="UP000002676">
    <property type="component" value="Chromosome"/>
</dbReference>
<dbReference type="GO" id="GO:0009317">
    <property type="term" value="C:acetyl-CoA carboxylase complex"/>
    <property type="evidence" value="ECO:0007669"/>
    <property type="project" value="InterPro"/>
</dbReference>
<dbReference type="GO" id="GO:0003989">
    <property type="term" value="F:acetyl-CoA carboxylase activity"/>
    <property type="evidence" value="ECO:0007669"/>
    <property type="project" value="InterPro"/>
</dbReference>
<dbReference type="GO" id="GO:0005524">
    <property type="term" value="F:ATP binding"/>
    <property type="evidence" value="ECO:0007669"/>
    <property type="project" value="UniProtKB-KW"/>
</dbReference>
<dbReference type="GO" id="GO:0016743">
    <property type="term" value="F:carboxyl- or carbamoyltransferase activity"/>
    <property type="evidence" value="ECO:0007669"/>
    <property type="project" value="UniProtKB-UniRule"/>
</dbReference>
<dbReference type="GO" id="GO:0006633">
    <property type="term" value="P:fatty acid biosynthetic process"/>
    <property type="evidence" value="ECO:0007669"/>
    <property type="project" value="UniProtKB-KW"/>
</dbReference>
<dbReference type="GO" id="GO:2001295">
    <property type="term" value="P:malonyl-CoA biosynthetic process"/>
    <property type="evidence" value="ECO:0007669"/>
    <property type="project" value="UniProtKB-UniRule"/>
</dbReference>
<dbReference type="Gene3D" id="3.90.226.10">
    <property type="entry name" value="2-enoyl-CoA Hydratase, Chain A, domain 1"/>
    <property type="match status" value="1"/>
</dbReference>
<dbReference type="HAMAP" id="MF_00823">
    <property type="entry name" value="AcetylCoA_CT_alpha"/>
    <property type="match status" value="1"/>
</dbReference>
<dbReference type="InterPro" id="IPR001095">
    <property type="entry name" value="Acetyl_CoA_COase_a_su"/>
</dbReference>
<dbReference type="InterPro" id="IPR029045">
    <property type="entry name" value="ClpP/crotonase-like_dom_sf"/>
</dbReference>
<dbReference type="InterPro" id="IPR011763">
    <property type="entry name" value="COA_CT_C"/>
</dbReference>
<dbReference type="NCBIfam" id="TIGR00513">
    <property type="entry name" value="accA"/>
    <property type="match status" value="1"/>
</dbReference>
<dbReference type="NCBIfam" id="NF041504">
    <property type="entry name" value="AccA_sub"/>
    <property type="match status" value="1"/>
</dbReference>
<dbReference type="NCBIfam" id="NF004344">
    <property type="entry name" value="PRK05724.1"/>
    <property type="match status" value="1"/>
</dbReference>
<dbReference type="PANTHER" id="PTHR42853">
    <property type="entry name" value="ACETYL-COENZYME A CARBOXYLASE CARBOXYL TRANSFERASE SUBUNIT ALPHA"/>
    <property type="match status" value="1"/>
</dbReference>
<dbReference type="PANTHER" id="PTHR42853:SF3">
    <property type="entry name" value="ACETYL-COENZYME A CARBOXYLASE CARBOXYL TRANSFERASE SUBUNIT ALPHA, CHLOROPLASTIC"/>
    <property type="match status" value="1"/>
</dbReference>
<dbReference type="Pfam" id="PF03255">
    <property type="entry name" value="ACCA"/>
    <property type="match status" value="1"/>
</dbReference>
<dbReference type="PRINTS" id="PR01069">
    <property type="entry name" value="ACCCTRFRASEA"/>
</dbReference>
<dbReference type="SUPFAM" id="SSF52096">
    <property type="entry name" value="ClpP/crotonase"/>
    <property type="match status" value="1"/>
</dbReference>
<dbReference type="PROSITE" id="PS50989">
    <property type="entry name" value="COA_CT_CTER"/>
    <property type="match status" value="1"/>
</dbReference>
<comment type="function">
    <text evidence="1">Component of the acetyl coenzyme A carboxylase (ACC) complex. First, biotin carboxylase catalyzes the carboxylation of biotin on its carrier protein (BCCP) and then the CO(2) group is transferred by the carboxyltransferase to acetyl-CoA to form malonyl-CoA.</text>
</comment>
<comment type="catalytic activity">
    <reaction evidence="1">
        <text>N(6)-carboxybiotinyl-L-lysyl-[protein] + acetyl-CoA = N(6)-biotinyl-L-lysyl-[protein] + malonyl-CoA</text>
        <dbReference type="Rhea" id="RHEA:54728"/>
        <dbReference type="Rhea" id="RHEA-COMP:10505"/>
        <dbReference type="Rhea" id="RHEA-COMP:10506"/>
        <dbReference type="ChEBI" id="CHEBI:57288"/>
        <dbReference type="ChEBI" id="CHEBI:57384"/>
        <dbReference type="ChEBI" id="CHEBI:83144"/>
        <dbReference type="ChEBI" id="CHEBI:83145"/>
        <dbReference type="EC" id="2.1.3.15"/>
    </reaction>
</comment>
<comment type="pathway">
    <text evidence="1">Lipid metabolism; malonyl-CoA biosynthesis; malonyl-CoA from acetyl-CoA: step 1/1.</text>
</comment>
<comment type="subunit">
    <text evidence="1">Acetyl-CoA carboxylase is a heterohexamer composed of biotin carboxyl carrier protein (AccB), biotin carboxylase (AccC) and two subunits each of ACCase subunit alpha (AccA) and ACCase subunit beta (AccD).</text>
</comment>
<comment type="subcellular location">
    <subcellularLocation>
        <location evidence="1">Cytoplasm</location>
    </subcellularLocation>
</comment>
<comment type="similarity">
    <text evidence="1">Belongs to the AccA family.</text>
</comment>
<organism>
    <name type="scientific">Bordetella pertussis (strain Tohama I / ATCC BAA-589 / NCTC 13251)</name>
    <dbReference type="NCBI Taxonomy" id="257313"/>
    <lineage>
        <taxon>Bacteria</taxon>
        <taxon>Pseudomonadati</taxon>
        <taxon>Pseudomonadota</taxon>
        <taxon>Betaproteobacteria</taxon>
        <taxon>Burkholderiales</taxon>
        <taxon>Alcaligenaceae</taxon>
        <taxon>Bordetella</taxon>
    </lineage>
</organism>
<protein>
    <recommendedName>
        <fullName evidence="1">Acetyl-coenzyme A carboxylase carboxyl transferase subunit alpha</fullName>
        <shortName evidence="1">ACCase subunit alpha</shortName>
        <shortName evidence="1">Acetyl-CoA carboxylase carboxyltransferase subunit alpha</shortName>
        <ecNumber evidence="1">2.1.3.15</ecNumber>
    </recommendedName>
</protein>
<feature type="chain" id="PRO_0000223741" description="Acetyl-coenzyme A carboxylase carboxyl transferase subunit alpha">
    <location>
        <begin position="1"/>
        <end position="321"/>
    </location>
</feature>
<feature type="domain" description="CoA carboxyltransferase C-terminal" evidence="2">
    <location>
        <begin position="39"/>
        <end position="293"/>
    </location>
</feature>
<name>ACCA_BORPE</name>
<sequence length="321" mass="35694">MRNTFLEFEQPLAELENKIEQLRYVQADSAVDISDEIGRLQQKSQNLAKEIYGKLTPWQTALVARHPQRPYTLDYVREIFTDFHELHGDRMYADDQSIVGGLARFNGSACMVIGHQKGRDTKERAARNFGMPRPEGYRKALRLMRLAEKFRLPIFTFIDTPGAYPGIGAEERGQSEAIGRNLYAMAELKVPVICTVIGEGGSGGALAIAVGNAVLMLQYATYSVISPEGCASILWRSADKAPEAAEALAITAPRLKDLGLVDRVVNEPVGGAHRDPRVMARLLRRALGDALRQLQGLGPEQLVDQRLQRLMSYGRFQEVRA</sequence>